<name>CYAY_PARC0</name>
<reference key="1">
    <citation type="submission" date="2006-12" db="EMBL/GenBank/DDBJ databases">
        <title>Complete sequence of Acidovorax avenae subsp. citrulli AAC00-1.</title>
        <authorList>
            <person name="Copeland A."/>
            <person name="Lucas S."/>
            <person name="Lapidus A."/>
            <person name="Barry K."/>
            <person name="Detter J.C."/>
            <person name="Glavina del Rio T."/>
            <person name="Dalin E."/>
            <person name="Tice H."/>
            <person name="Pitluck S."/>
            <person name="Kiss H."/>
            <person name="Brettin T."/>
            <person name="Bruce D."/>
            <person name="Han C."/>
            <person name="Tapia R."/>
            <person name="Gilna P."/>
            <person name="Schmutz J."/>
            <person name="Larimer F."/>
            <person name="Land M."/>
            <person name="Hauser L."/>
            <person name="Kyrpides N."/>
            <person name="Kim E."/>
            <person name="Stahl D."/>
            <person name="Richardson P."/>
        </authorList>
    </citation>
    <scope>NUCLEOTIDE SEQUENCE [LARGE SCALE GENOMIC DNA]</scope>
    <source>
        <strain>AAC00-1</strain>
    </source>
</reference>
<proteinExistence type="inferred from homology"/>
<accession>A1TKV4</accession>
<evidence type="ECO:0000255" key="1">
    <source>
        <dbReference type="HAMAP-Rule" id="MF_00142"/>
    </source>
</evidence>
<dbReference type="EMBL" id="CP000512">
    <property type="protein sequence ID" value="ABM31592.1"/>
    <property type="molecule type" value="Genomic_DNA"/>
</dbReference>
<dbReference type="RefSeq" id="WP_011794150.1">
    <property type="nucleotide sequence ID" value="NC_008752.1"/>
</dbReference>
<dbReference type="SMR" id="A1TKV4"/>
<dbReference type="STRING" id="397945.Aave_0994"/>
<dbReference type="GeneID" id="79790649"/>
<dbReference type="KEGG" id="aav:Aave_0994"/>
<dbReference type="eggNOG" id="COG1965">
    <property type="taxonomic scope" value="Bacteria"/>
</dbReference>
<dbReference type="HOGENOM" id="CLU_080880_3_0_4"/>
<dbReference type="OrthoDB" id="285675at2"/>
<dbReference type="Proteomes" id="UP000002596">
    <property type="component" value="Chromosome"/>
</dbReference>
<dbReference type="GO" id="GO:0005829">
    <property type="term" value="C:cytosol"/>
    <property type="evidence" value="ECO:0007669"/>
    <property type="project" value="TreeGrafter"/>
</dbReference>
<dbReference type="GO" id="GO:0008199">
    <property type="term" value="F:ferric iron binding"/>
    <property type="evidence" value="ECO:0007669"/>
    <property type="project" value="InterPro"/>
</dbReference>
<dbReference type="GO" id="GO:0008198">
    <property type="term" value="F:ferrous iron binding"/>
    <property type="evidence" value="ECO:0007669"/>
    <property type="project" value="TreeGrafter"/>
</dbReference>
<dbReference type="GO" id="GO:0016226">
    <property type="term" value="P:iron-sulfur cluster assembly"/>
    <property type="evidence" value="ECO:0007669"/>
    <property type="project" value="UniProtKB-UniRule"/>
</dbReference>
<dbReference type="Gene3D" id="3.30.920.10">
    <property type="entry name" value="Frataxin/CyaY"/>
    <property type="match status" value="1"/>
</dbReference>
<dbReference type="HAMAP" id="MF_00142">
    <property type="entry name" value="CyaY"/>
    <property type="match status" value="1"/>
</dbReference>
<dbReference type="InterPro" id="IPR047584">
    <property type="entry name" value="CyaY"/>
</dbReference>
<dbReference type="InterPro" id="IPR002908">
    <property type="entry name" value="Frataxin/CyaY"/>
</dbReference>
<dbReference type="InterPro" id="IPR036524">
    <property type="entry name" value="Frataxin/CyaY_sf"/>
</dbReference>
<dbReference type="InterPro" id="IPR020895">
    <property type="entry name" value="Frataxin_CS"/>
</dbReference>
<dbReference type="NCBIfam" id="TIGR03421">
    <property type="entry name" value="FeS_CyaY"/>
    <property type="match status" value="1"/>
</dbReference>
<dbReference type="PANTHER" id="PTHR16821">
    <property type="entry name" value="FRATAXIN"/>
    <property type="match status" value="1"/>
</dbReference>
<dbReference type="PANTHER" id="PTHR16821:SF2">
    <property type="entry name" value="FRATAXIN, MITOCHONDRIAL"/>
    <property type="match status" value="1"/>
</dbReference>
<dbReference type="Pfam" id="PF01491">
    <property type="entry name" value="Frataxin_Cyay"/>
    <property type="match status" value="1"/>
</dbReference>
<dbReference type="SMART" id="SM01219">
    <property type="entry name" value="Frataxin_Cyay"/>
    <property type="match status" value="1"/>
</dbReference>
<dbReference type="SUPFAM" id="SSF55387">
    <property type="entry name" value="Frataxin/Nqo15-like"/>
    <property type="match status" value="1"/>
</dbReference>
<dbReference type="PROSITE" id="PS01344">
    <property type="entry name" value="FRATAXIN_1"/>
    <property type="match status" value="1"/>
</dbReference>
<dbReference type="PROSITE" id="PS50810">
    <property type="entry name" value="FRATAXIN_2"/>
    <property type="match status" value="1"/>
</dbReference>
<feature type="chain" id="PRO_1000010906" description="Iron-sulfur cluster assembly protein CyaY">
    <location>
        <begin position="1"/>
        <end position="110"/>
    </location>
</feature>
<gene>
    <name evidence="1" type="primary">cyaY</name>
    <name type="ordered locus">Aave_0994</name>
</gene>
<comment type="function">
    <text evidence="1">Involved in iron-sulfur (Fe-S) cluster assembly. May act as a regulator of Fe-S biogenesis.</text>
</comment>
<comment type="similarity">
    <text evidence="1">Belongs to the frataxin family.</text>
</comment>
<protein>
    <recommendedName>
        <fullName evidence="1">Iron-sulfur cluster assembly protein CyaY</fullName>
    </recommendedName>
</protein>
<organism>
    <name type="scientific">Paracidovorax citrulli (strain AAC00-1)</name>
    <name type="common">Acidovorax citrulli</name>
    <dbReference type="NCBI Taxonomy" id="397945"/>
    <lineage>
        <taxon>Bacteria</taxon>
        <taxon>Pseudomonadati</taxon>
        <taxon>Pseudomonadota</taxon>
        <taxon>Betaproteobacteria</taxon>
        <taxon>Burkholderiales</taxon>
        <taxon>Comamonadaceae</taxon>
        <taxon>Paracidovorax</taxon>
    </lineage>
</organism>
<keyword id="KW-0408">Iron</keyword>
<keyword id="KW-0479">Metal-binding</keyword>
<sequence>MTDTEFLDHAEKLLLAVEQGCDRINDTTDADLDAQRSGGMVTITFPNRSQIVINLQKPLHEIWMAAQSGGYHYRLEDGAWKDTKGDGEFFAALTRDASRQSGMPLVFSAS</sequence>